<organism>
    <name type="scientific">Mus musculus</name>
    <name type="common">Mouse</name>
    <dbReference type="NCBI Taxonomy" id="10090"/>
    <lineage>
        <taxon>Eukaryota</taxon>
        <taxon>Metazoa</taxon>
        <taxon>Chordata</taxon>
        <taxon>Craniata</taxon>
        <taxon>Vertebrata</taxon>
        <taxon>Euteleostomi</taxon>
        <taxon>Mammalia</taxon>
        <taxon>Eutheria</taxon>
        <taxon>Euarchontoglires</taxon>
        <taxon>Glires</taxon>
        <taxon>Rodentia</taxon>
        <taxon>Myomorpha</taxon>
        <taxon>Muroidea</taxon>
        <taxon>Muridae</taxon>
        <taxon>Murinae</taxon>
        <taxon>Mus</taxon>
        <taxon>Mus</taxon>
    </lineage>
</organism>
<evidence type="ECO:0000250" key="1">
    <source>
        <dbReference type="UniProtKB" id="Q8NCR6"/>
    </source>
</evidence>
<evidence type="ECO:0000269" key="2">
    <source>
    </source>
</evidence>
<evidence type="ECO:0000269" key="3">
    <source>
    </source>
</evidence>
<evidence type="ECO:0000269" key="4">
    <source>
    </source>
</evidence>
<evidence type="ECO:0000269" key="5">
    <source>
    </source>
</evidence>
<evidence type="ECO:0000269" key="6">
    <source>
    </source>
</evidence>
<evidence type="ECO:0000303" key="7">
    <source>
    </source>
</evidence>
<evidence type="ECO:0000303" key="8">
    <source>
    </source>
</evidence>
<evidence type="ECO:0000303" key="9">
    <source>
    </source>
</evidence>
<evidence type="ECO:0000305" key="10"/>
<evidence type="ECO:0000305" key="11">
    <source>
    </source>
</evidence>
<evidence type="ECO:0007744" key="12">
    <source>
        <dbReference type="PDB" id="8IYJ"/>
    </source>
</evidence>
<reference key="1">
    <citation type="journal article" date="2008" name="Mol. Reprod. Dev.">
        <title>Isolation and characterization of the spermatid-specific Smrp1 gene encoding a novel manchette protein.</title>
        <authorList>
            <person name="Matsuoka Y."/>
            <person name="Miyagawa Y."/>
            <person name="Tokuhiro K."/>
            <person name="Kitamura K."/>
            <person name="Iguchi N."/>
            <person name="Maekawa M."/>
            <person name="Takahashi T."/>
            <person name="Tsujimura A."/>
            <person name="Matsumiya K."/>
            <person name="Okuyama A."/>
            <person name="Nishimune Y."/>
            <person name="Tanaka H."/>
        </authorList>
    </citation>
    <scope>NUCLEOTIDE SEQUENCE [MRNA] (ISOFORM 1)</scope>
    <scope>FUNCTION</scope>
    <scope>INTERACTION WITH ALPHA-TUBULIN</scope>
    <scope>SUBCELLULAR LOCATION</scope>
    <scope>TISSUE SPECIFICITY</scope>
    <scope>DEVELOPMENTAL STAGE</scope>
    <source>
        <tissue>Testis</tissue>
    </source>
</reference>
<reference key="2">
    <citation type="journal article" date="2009" name="Eur. Respir. J.">
        <title>Chronological expression of Ciliated Bronchial Epithelium 1 during pulmonary development.</title>
        <authorList>
            <person name="Haitchi H.M."/>
            <person name="Yoshisue H."/>
            <person name="Ribbene A."/>
            <person name="Wilson S.J."/>
            <person name="Holloway J.W."/>
            <person name="Bucchieri F."/>
            <person name="Hanley N.A."/>
            <person name="Wilson D.I."/>
            <person name="Zummo G."/>
            <person name="Holgate S.T."/>
            <person name="Davies D.E."/>
        </authorList>
    </citation>
    <scope>NUCLEOTIDE SEQUENCE [MRNA] (ISOFORMS 3 AND 4)</scope>
    <scope>ALTERNATIVE SPLICING (ISOFORMS 1; 2; 3 AND 4)</scope>
    <scope>TISSUE SPECIFICITY (ISOFORMS 1; 2; 3 AND 4)</scope>
    <scope>DEVELOPMENTAL STAGE</scope>
    <source>
        <strain>MF1</strain>
    </source>
</reference>
<reference key="3">
    <citation type="journal article" date="2005" name="Science">
        <title>The transcriptional landscape of the mammalian genome.</title>
        <authorList>
            <person name="Carninci P."/>
            <person name="Kasukawa T."/>
            <person name="Katayama S."/>
            <person name="Gough J."/>
            <person name="Frith M.C."/>
            <person name="Maeda N."/>
            <person name="Oyama R."/>
            <person name="Ravasi T."/>
            <person name="Lenhard B."/>
            <person name="Wells C."/>
            <person name="Kodzius R."/>
            <person name="Shimokawa K."/>
            <person name="Bajic V.B."/>
            <person name="Brenner S.E."/>
            <person name="Batalov S."/>
            <person name="Forrest A.R."/>
            <person name="Zavolan M."/>
            <person name="Davis M.J."/>
            <person name="Wilming L.G."/>
            <person name="Aidinis V."/>
            <person name="Allen J.E."/>
            <person name="Ambesi-Impiombato A."/>
            <person name="Apweiler R."/>
            <person name="Aturaliya R.N."/>
            <person name="Bailey T.L."/>
            <person name="Bansal M."/>
            <person name="Baxter L."/>
            <person name="Beisel K.W."/>
            <person name="Bersano T."/>
            <person name="Bono H."/>
            <person name="Chalk A.M."/>
            <person name="Chiu K.P."/>
            <person name="Choudhary V."/>
            <person name="Christoffels A."/>
            <person name="Clutterbuck D.R."/>
            <person name="Crowe M.L."/>
            <person name="Dalla E."/>
            <person name="Dalrymple B.P."/>
            <person name="de Bono B."/>
            <person name="Della Gatta G."/>
            <person name="di Bernardo D."/>
            <person name="Down T."/>
            <person name="Engstrom P."/>
            <person name="Fagiolini M."/>
            <person name="Faulkner G."/>
            <person name="Fletcher C.F."/>
            <person name="Fukushima T."/>
            <person name="Furuno M."/>
            <person name="Futaki S."/>
            <person name="Gariboldi M."/>
            <person name="Georgii-Hemming P."/>
            <person name="Gingeras T.R."/>
            <person name="Gojobori T."/>
            <person name="Green R.E."/>
            <person name="Gustincich S."/>
            <person name="Harbers M."/>
            <person name="Hayashi Y."/>
            <person name="Hensch T.K."/>
            <person name="Hirokawa N."/>
            <person name="Hill D."/>
            <person name="Huminiecki L."/>
            <person name="Iacono M."/>
            <person name="Ikeo K."/>
            <person name="Iwama A."/>
            <person name="Ishikawa T."/>
            <person name="Jakt M."/>
            <person name="Kanapin A."/>
            <person name="Katoh M."/>
            <person name="Kawasawa Y."/>
            <person name="Kelso J."/>
            <person name="Kitamura H."/>
            <person name="Kitano H."/>
            <person name="Kollias G."/>
            <person name="Krishnan S.P."/>
            <person name="Kruger A."/>
            <person name="Kummerfeld S.K."/>
            <person name="Kurochkin I.V."/>
            <person name="Lareau L.F."/>
            <person name="Lazarevic D."/>
            <person name="Lipovich L."/>
            <person name="Liu J."/>
            <person name="Liuni S."/>
            <person name="McWilliam S."/>
            <person name="Madan Babu M."/>
            <person name="Madera M."/>
            <person name="Marchionni L."/>
            <person name="Matsuda H."/>
            <person name="Matsuzawa S."/>
            <person name="Miki H."/>
            <person name="Mignone F."/>
            <person name="Miyake S."/>
            <person name="Morris K."/>
            <person name="Mottagui-Tabar S."/>
            <person name="Mulder N."/>
            <person name="Nakano N."/>
            <person name="Nakauchi H."/>
            <person name="Ng P."/>
            <person name="Nilsson R."/>
            <person name="Nishiguchi S."/>
            <person name="Nishikawa S."/>
            <person name="Nori F."/>
            <person name="Ohara O."/>
            <person name="Okazaki Y."/>
            <person name="Orlando V."/>
            <person name="Pang K.C."/>
            <person name="Pavan W.J."/>
            <person name="Pavesi G."/>
            <person name="Pesole G."/>
            <person name="Petrovsky N."/>
            <person name="Piazza S."/>
            <person name="Reed J."/>
            <person name="Reid J.F."/>
            <person name="Ring B.Z."/>
            <person name="Ringwald M."/>
            <person name="Rost B."/>
            <person name="Ruan Y."/>
            <person name="Salzberg S.L."/>
            <person name="Sandelin A."/>
            <person name="Schneider C."/>
            <person name="Schoenbach C."/>
            <person name="Sekiguchi K."/>
            <person name="Semple C.A."/>
            <person name="Seno S."/>
            <person name="Sessa L."/>
            <person name="Sheng Y."/>
            <person name="Shibata Y."/>
            <person name="Shimada H."/>
            <person name="Shimada K."/>
            <person name="Silva D."/>
            <person name="Sinclair B."/>
            <person name="Sperling S."/>
            <person name="Stupka E."/>
            <person name="Sugiura K."/>
            <person name="Sultana R."/>
            <person name="Takenaka Y."/>
            <person name="Taki K."/>
            <person name="Tammoja K."/>
            <person name="Tan S.L."/>
            <person name="Tang S."/>
            <person name="Taylor M.S."/>
            <person name="Tegner J."/>
            <person name="Teichmann S.A."/>
            <person name="Ueda H.R."/>
            <person name="van Nimwegen E."/>
            <person name="Verardo R."/>
            <person name="Wei C.L."/>
            <person name="Yagi K."/>
            <person name="Yamanishi H."/>
            <person name="Zabarovsky E."/>
            <person name="Zhu S."/>
            <person name="Zimmer A."/>
            <person name="Hide W."/>
            <person name="Bult C."/>
            <person name="Grimmond S.M."/>
            <person name="Teasdale R.D."/>
            <person name="Liu E.T."/>
            <person name="Brusic V."/>
            <person name="Quackenbush J."/>
            <person name="Wahlestedt C."/>
            <person name="Mattick J.S."/>
            <person name="Hume D.A."/>
            <person name="Kai C."/>
            <person name="Sasaki D."/>
            <person name="Tomaru Y."/>
            <person name="Fukuda S."/>
            <person name="Kanamori-Katayama M."/>
            <person name="Suzuki M."/>
            <person name="Aoki J."/>
            <person name="Arakawa T."/>
            <person name="Iida J."/>
            <person name="Imamura K."/>
            <person name="Itoh M."/>
            <person name="Kato T."/>
            <person name="Kawaji H."/>
            <person name="Kawagashira N."/>
            <person name="Kawashima T."/>
            <person name="Kojima M."/>
            <person name="Kondo S."/>
            <person name="Konno H."/>
            <person name="Nakano K."/>
            <person name="Ninomiya N."/>
            <person name="Nishio T."/>
            <person name="Okada M."/>
            <person name="Plessy C."/>
            <person name="Shibata K."/>
            <person name="Shiraki T."/>
            <person name="Suzuki S."/>
            <person name="Tagami M."/>
            <person name="Waki K."/>
            <person name="Watahiki A."/>
            <person name="Okamura-Oho Y."/>
            <person name="Suzuki H."/>
            <person name="Kawai J."/>
            <person name="Hayashizaki Y."/>
        </authorList>
    </citation>
    <scope>NUCLEOTIDE SEQUENCE [LARGE SCALE MRNA] (ISOFORM 3)</scope>
    <source>
        <strain>C57BL/6J</strain>
        <tissue>Embryo</tissue>
    </source>
</reference>
<reference key="4">
    <citation type="journal article" date="2009" name="PLoS Biol.">
        <title>Lineage-specific biology revealed by a finished genome assembly of the mouse.</title>
        <authorList>
            <person name="Church D.M."/>
            <person name="Goodstadt L."/>
            <person name="Hillier L.W."/>
            <person name="Zody M.C."/>
            <person name="Goldstein S."/>
            <person name="She X."/>
            <person name="Bult C.J."/>
            <person name="Agarwala R."/>
            <person name="Cherry J.L."/>
            <person name="DiCuccio M."/>
            <person name="Hlavina W."/>
            <person name="Kapustin Y."/>
            <person name="Meric P."/>
            <person name="Maglott D."/>
            <person name="Birtle Z."/>
            <person name="Marques A.C."/>
            <person name="Graves T."/>
            <person name="Zhou S."/>
            <person name="Teague B."/>
            <person name="Potamousis K."/>
            <person name="Churas C."/>
            <person name="Place M."/>
            <person name="Herschleb J."/>
            <person name="Runnheim R."/>
            <person name="Forrest D."/>
            <person name="Amos-Landgraf J."/>
            <person name="Schwartz D.C."/>
            <person name="Cheng Z."/>
            <person name="Lindblad-Toh K."/>
            <person name="Eichler E.E."/>
            <person name="Ponting C.P."/>
        </authorList>
    </citation>
    <scope>NUCLEOTIDE SEQUENCE [LARGE SCALE GENOMIC DNA]</scope>
    <source>
        <strain>C57BL/6J</strain>
    </source>
</reference>
<reference key="5">
    <citation type="journal article" date="2016" name="Proc. Natl. Acad. Sci. U.S.A.">
        <title>Genome engineering uncovers 54 evolutionarily conserved and testis-enriched genes that are not required for male fertility in mice.</title>
        <authorList>
            <person name="Miyata H."/>
            <person name="Castaneda J.M."/>
            <person name="Fujihara Y."/>
            <person name="Yu Z."/>
            <person name="Archambeault D.R."/>
            <person name="Isotani A."/>
            <person name="Kiyozumi D."/>
            <person name="Kriseman M.L."/>
            <person name="Mashiko D."/>
            <person name="Matsumura T."/>
            <person name="Matzuk R.M."/>
            <person name="Mori M."/>
            <person name="Noda T."/>
            <person name="Oji A."/>
            <person name="Okabe M."/>
            <person name="Prunskaite-Hyyrylainen R."/>
            <person name="Ramirez-Solis R."/>
            <person name="Satouh Y."/>
            <person name="Zhang Q."/>
            <person name="Ikawa M."/>
            <person name="Matzuk M.M."/>
        </authorList>
    </citation>
    <scope>DISRUPTION PHENOTYPE</scope>
    <scope>TISSUE SPECIFICITY</scope>
</reference>
<reference key="6">
    <citation type="journal article" date="2019" name="Endocrinology">
        <title>CBE1 Is a Manchette- and Mitochondria-Associated Protein With a Potential Role in Somatic Cell Proliferation.</title>
        <authorList>
            <person name="Pleuger C."/>
            <person name="Lehti M.S."/>
            <person name="Cooper M."/>
            <person name="O'Connor A.E."/>
            <person name="Merriner D.J."/>
            <person name="Smyth I.M."/>
            <person name="Cottle D.L."/>
            <person name="Fietz D."/>
            <person name="Bergmann M."/>
            <person name="O'Bryan M.K."/>
        </authorList>
    </citation>
    <scope>SUBCELLULAR LOCATION</scope>
    <scope>DEVELOPMENTAL STAGE</scope>
    <scope>FUNCTION</scope>
    <scope>DISRUPTION PHENOTYPE</scope>
    <scope>INDUCTION</scope>
</reference>
<reference evidence="12" key="7">
    <citation type="journal article" date="2023" name="Cell">
        <title>Structures of sperm flagellar doublet microtubules expand the genetic spectrum of male infertility.</title>
        <authorList>
            <person name="Zhou L."/>
            <person name="Liu H."/>
            <person name="Liu S."/>
            <person name="Yang X."/>
            <person name="Dong Y."/>
            <person name="Pan Y."/>
            <person name="Xiao Z."/>
            <person name="Zheng B."/>
            <person name="Sun Y."/>
            <person name="Huang P."/>
            <person name="Zhang X."/>
            <person name="Hu J."/>
            <person name="Sun R."/>
            <person name="Feng S."/>
            <person name="Zhu Y."/>
            <person name="Liu M."/>
            <person name="Gui M."/>
            <person name="Wu J."/>
        </authorList>
    </citation>
    <scope>STRUCTURE BY ELECTRON MICROSCOPY (3.50 ANGSTROMS) OF SPERM FLAGELLAR DOUBLET MICROTUBULES</scope>
    <scope>SUBCELLULAR LOCATION</scope>
    <scope>SUBUNIT</scope>
</reference>
<dbReference type="EMBL" id="AB231294">
    <property type="protein sequence ID" value="BAE78528.1"/>
    <property type="molecule type" value="mRNA"/>
</dbReference>
<dbReference type="EMBL" id="DQ873295">
    <property type="protein sequence ID" value="ABI35956.1"/>
    <property type="molecule type" value="mRNA"/>
</dbReference>
<dbReference type="EMBL" id="DQ873296">
    <property type="protein sequence ID" value="ABI35957.1"/>
    <property type="molecule type" value="mRNA"/>
</dbReference>
<dbReference type="EMBL" id="AK003742">
    <property type="protein sequence ID" value="BAB22974.1"/>
    <property type="molecule type" value="mRNA"/>
</dbReference>
<dbReference type="EMBL" id="AL831723">
    <property type="status" value="NOT_ANNOTATED_CDS"/>
    <property type="molecule type" value="Genomic_DNA"/>
</dbReference>
<dbReference type="CCDS" id="CCDS38717.1">
    <molecule id="Q2MH31-1"/>
</dbReference>
<dbReference type="RefSeq" id="NP_001041470.1">
    <molecule id="Q2MH31-1"/>
    <property type="nucleotide sequence ID" value="NM_001048005.1"/>
</dbReference>
<dbReference type="RefSeq" id="NP_001240706.1">
    <molecule id="Q2MH31-4"/>
    <property type="nucleotide sequence ID" value="NM_001253777.1"/>
</dbReference>
<dbReference type="RefSeq" id="NP_001240707.1">
    <molecule id="Q2MH31-3"/>
    <property type="nucleotide sequence ID" value="NM_001253778.1"/>
</dbReference>
<dbReference type="RefSeq" id="NP_082900.1">
    <molecule id="Q2MH31-2"/>
    <property type="nucleotide sequence ID" value="NM_028624.1"/>
</dbReference>
<dbReference type="PDB" id="8IYJ">
    <property type="method" value="EM"/>
    <property type="resolution" value="3.50 A"/>
    <property type="chains" value="X0/X1/X2/X3=1-260"/>
</dbReference>
<dbReference type="PDBsum" id="8IYJ"/>
<dbReference type="EMDB" id="EMD-35823"/>
<dbReference type="SMR" id="Q2MH31"/>
<dbReference type="FunCoup" id="Q2MH31">
    <property type="interactions" value="500"/>
</dbReference>
<dbReference type="STRING" id="10090.ENSMUSP00000030152"/>
<dbReference type="GlyGen" id="Q2MH31">
    <property type="glycosylation" value="1 site"/>
</dbReference>
<dbReference type="iPTMnet" id="Q2MH31"/>
<dbReference type="PhosphoSitePlus" id="Q2MH31"/>
<dbReference type="SwissPalm" id="Q2MH31"/>
<dbReference type="PaxDb" id="10090-ENSMUSP00000030152"/>
<dbReference type="ProteomicsDB" id="261455">
    <molecule id="Q2MH31-1"/>
</dbReference>
<dbReference type="ProteomicsDB" id="261456">
    <molecule id="Q2MH31-4"/>
</dbReference>
<dbReference type="ProteomicsDB" id="261457">
    <molecule id="Q2MH31-2"/>
</dbReference>
<dbReference type="ProteomicsDB" id="261458">
    <molecule id="Q2MH31-3"/>
</dbReference>
<dbReference type="TopDownProteomics" id="Q2MH31-1">
    <molecule id="Q2MH31-1"/>
</dbReference>
<dbReference type="Antibodypedia" id="55618">
    <property type="antibodies" value="20 antibodies from 12 providers"/>
</dbReference>
<dbReference type="Ensembl" id="ENSMUST00000030152.13">
    <molecule id="Q2MH31-1"/>
    <property type="protein sequence ID" value="ENSMUSP00000030152.7"/>
    <property type="gene ID" value="ENSMUSG00000028441.13"/>
</dbReference>
<dbReference type="GeneID" id="73721"/>
<dbReference type="KEGG" id="mmu:73721"/>
<dbReference type="UCSC" id="uc008siu.1">
    <molecule id="Q2MH31-2"/>
    <property type="organism name" value="mouse"/>
</dbReference>
<dbReference type="UCSC" id="uc008siv.1">
    <molecule id="Q2MH31-3"/>
    <property type="organism name" value="mouse"/>
</dbReference>
<dbReference type="UCSC" id="uc008six.1">
    <molecule id="Q2MH31-1"/>
    <property type="organism name" value="mouse"/>
</dbReference>
<dbReference type="UCSC" id="uc008siy.1">
    <molecule id="Q2MH31-4"/>
    <property type="organism name" value="mouse"/>
</dbReference>
<dbReference type="AGR" id="MGI:1920971"/>
<dbReference type="CTD" id="84688"/>
<dbReference type="MGI" id="MGI:1920971">
    <property type="gene designation" value="1110017D15Rik"/>
</dbReference>
<dbReference type="VEuPathDB" id="HostDB:ENSMUSG00000028441"/>
<dbReference type="eggNOG" id="ENOG502QRFQ">
    <property type="taxonomic scope" value="Eukaryota"/>
</dbReference>
<dbReference type="GeneTree" id="ENSGT00390000000945"/>
<dbReference type="HOGENOM" id="CLU_093197_0_0_1"/>
<dbReference type="InParanoid" id="Q2MH31"/>
<dbReference type="OMA" id="QTMERHV"/>
<dbReference type="OrthoDB" id="9820464at2759"/>
<dbReference type="PhylomeDB" id="Q2MH31"/>
<dbReference type="TreeFam" id="TF335656"/>
<dbReference type="BioGRID-ORCS" id="73721">
    <property type="hits" value="1 hit in 76 CRISPR screens"/>
</dbReference>
<dbReference type="PRO" id="PR:Q2MH31"/>
<dbReference type="Proteomes" id="UP000000589">
    <property type="component" value="Chromosome 4"/>
</dbReference>
<dbReference type="RNAct" id="Q2MH31">
    <property type="molecule type" value="protein"/>
</dbReference>
<dbReference type="Bgee" id="ENSMUSG00000028441">
    <property type="expression patterns" value="Expressed in seminiferous tubule of testis and 120 other cell types or tissues"/>
</dbReference>
<dbReference type="ExpressionAtlas" id="Q2MH31">
    <property type="expression patterns" value="baseline and differential"/>
</dbReference>
<dbReference type="GO" id="GO:0160111">
    <property type="term" value="C:axonemal A tubule inner sheath"/>
    <property type="evidence" value="ECO:0000314"/>
    <property type="project" value="MGI"/>
</dbReference>
<dbReference type="GO" id="GO:0005737">
    <property type="term" value="C:cytoplasm"/>
    <property type="evidence" value="ECO:0000314"/>
    <property type="project" value="UniProtKB"/>
</dbReference>
<dbReference type="GO" id="GO:0005829">
    <property type="term" value="C:cytosol"/>
    <property type="evidence" value="ECO:0007669"/>
    <property type="project" value="Ensembl"/>
</dbReference>
<dbReference type="GO" id="GO:0002177">
    <property type="term" value="C:manchette"/>
    <property type="evidence" value="ECO:0000314"/>
    <property type="project" value="UniProtKB"/>
</dbReference>
<dbReference type="GO" id="GO:0005739">
    <property type="term" value="C:mitochondrion"/>
    <property type="evidence" value="ECO:0000314"/>
    <property type="project" value="UniProtKB"/>
</dbReference>
<dbReference type="GO" id="GO:0005654">
    <property type="term" value="C:nucleoplasm"/>
    <property type="evidence" value="ECO:0007669"/>
    <property type="project" value="Ensembl"/>
</dbReference>
<dbReference type="GO" id="GO:0005634">
    <property type="term" value="C:nucleus"/>
    <property type="evidence" value="ECO:0000250"/>
    <property type="project" value="UniProtKB"/>
</dbReference>
<dbReference type="GO" id="GO:0048471">
    <property type="term" value="C:perinuclear region of cytoplasm"/>
    <property type="evidence" value="ECO:0000314"/>
    <property type="project" value="MGI"/>
</dbReference>
<dbReference type="GO" id="GO:0036126">
    <property type="term" value="C:sperm flagellum"/>
    <property type="evidence" value="ECO:0000314"/>
    <property type="project" value="UniProtKB"/>
</dbReference>
<dbReference type="GO" id="GO:0097225">
    <property type="term" value="C:sperm midpiece"/>
    <property type="evidence" value="ECO:0000314"/>
    <property type="project" value="UniProtKB"/>
</dbReference>
<dbReference type="GO" id="GO:0043014">
    <property type="term" value="F:alpha-tubulin binding"/>
    <property type="evidence" value="ECO:0000314"/>
    <property type="project" value="MGI"/>
</dbReference>
<dbReference type="GO" id="GO:0030154">
    <property type="term" value="P:cell differentiation"/>
    <property type="evidence" value="ECO:0007669"/>
    <property type="project" value="UniProtKB-KW"/>
</dbReference>
<dbReference type="GO" id="GO:0030317">
    <property type="term" value="P:flagellated sperm motility"/>
    <property type="evidence" value="ECO:0000314"/>
    <property type="project" value="UniProtKB"/>
</dbReference>
<dbReference type="GO" id="GO:0065003">
    <property type="term" value="P:protein-containing complex assembly"/>
    <property type="evidence" value="ECO:0000314"/>
    <property type="project" value="MGI"/>
</dbReference>
<dbReference type="GO" id="GO:0007283">
    <property type="term" value="P:spermatogenesis"/>
    <property type="evidence" value="ECO:0007669"/>
    <property type="project" value="UniProtKB-KW"/>
</dbReference>
<dbReference type="InterPro" id="IPR028195">
    <property type="entry name" value="SPMIP6"/>
</dbReference>
<dbReference type="PANTHER" id="PTHR35664">
    <property type="entry name" value="SPERMATID-SPECIFIC MANCHETTE-RELATED PROTEIN 1"/>
    <property type="match status" value="1"/>
</dbReference>
<dbReference type="PANTHER" id="PTHR35664:SF1">
    <property type="entry name" value="SPERMATID-SPECIFIC MANCHETTE-RELATED PROTEIN 1"/>
    <property type="match status" value="1"/>
</dbReference>
<dbReference type="Pfam" id="PF15181">
    <property type="entry name" value="SMRP1"/>
    <property type="match status" value="1"/>
</dbReference>
<comment type="function">
    <text evidence="5">May participate in intramanchette transport and midpiece formation of the sperm tail (PubMed:31504408). May play a potential role in somatic cell proliferation (PubMed:31504408).</text>
</comment>
<comment type="subunit">
    <text evidence="2 6">Microtubule inner protein component of sperm flagellar doublet microtubules (PubMed:37295417). Interacts with alpha-tubulin (PubMed:18163442).</text>
</comment>
<comment type="subcellular location">
    <subcellularLocation>
        <location evidence="2">Cytoplasm</location>
        <location evidence="2">Cytoskeleton</location>
    </subcellularLocation>
    <subcellularLocation>
        <location evidence="1">Nucleus</location>
    </subcellularLocation>
    <subcellularLocation>
        <location evidence="2 5">Cytoplasm</location>
    </subcellularLocation>
    <subcellularLocation>
        <location evidence="5">Mitochondrion</location>
    </subcellularLocation>
    <subcellularLocation>
        <location evidence="6 11">Cytoplasm</location>
        <location evidence="6 11">Cytoskeleton</location>
        <location evidence="6 11">Flagellum axoneme</location>
    </subcellularLocation>
    <text evidence="1 2 5">During spermatid elongation (step 10), localizes along the length of the manchette and later during the elongation process only at the distal ends of spermatid manchette (step 12). In late elongated spermatids (step 16), in the final steps of spermiogenesis, localization is restricted to the midpiece of the flagellum (PubMed:18163442, PubMed:31504408). Localizes at the contractile ring in dividing cells (PubMed:31504408). Predominantly perinuclear in bronchial epithelial cells but also detected in the nucleus in some primary epithelial cells and in a number of cell lines (By similarity).</text>
</comment>
<comment type="alternative products">
    <event type="alternative splicing"/>
    <isoform>
        <id>Q2MH31-1</id>
        <name>1</name>
        <name>Cbe1-long-ORF1</name>
        <sequence type="displayed"/>
    </isoform>
    <isoform>
        <id>Q2MH31-4</id>
        <name>2</name>
        <name>Cbe1-long-ORF2</name>
        <sequence type="described" ref="VSP_027173"/>
    </isoform>
    <isoform>
        <id>Q2MH31-2</id>
        <name>3</name>
        <name>Cbe1-ORF1</name>
        <sequence type="described" ref="VSP_027172"/>
    </isoform>
    <isoform>
        <id>Q2MH31-3</id>
        <name>4</name>
        <name>Cbe1-ORF2</name>
        <sequence type="described" ref="VSP_027172 VSP_027173"/>
    </isoform>
</comment>
<comment type="tissue specificity">
    <molecule>Isoform 1</molecule>
    <text evidence="2 3 4">Testis-specific, expressed exclusively in germ cells (at protein level).</text>
</comment>
<comment type="tissue specificity">
    <molecule>Isoform 2</molecule>
    <text evidence="3">Testis-specific.</text>
</comment>
<comment type="tissue specificity">
    <molecule>Isoform 3</molecule>
    <text evidence="3">Expressed in both lung and testis.</text>
</comment>
<comment type="tissue specificity">
    <molecule>Isoform 4</molecule>
    <text evidence="3">Expressed in both lung and testis.</text>
</comment>
<comment type="developmental stage">
    <text evidence="2 3 5">During male germ cell development, expression of isoform 1 begins at day 21, increases after day 30 and continues to increase in the adult. Expressed in elongating spermatids from steps 9-12 (at protein level). Expression in the lung increases at 16 dpc.</text>
</comment>
<comment type="induction">
    <text evidence="5">Up-regulated during cilia assembly in IMCD3 cells.</text>
</comment>
<comment type="disruption phenotype">
    <text evidence="5">Deficient mice are viable and have normal fertility.</text>
</comment>
<comment type="similarity">
    <text evidence="10">Belongs to the SPMIP6 family.</text>
</comment>
<keyword id="KW-0002">3D-structure</keyword>
<keyword id="KW-0025">Alternative splicing</keyword>
<keyword id="KW-0966">Cell projection</keyword>
<keyword id="KW-0969">Cilium</keyword>
<keyword id="KW-0963">Cytoplasm</keyword>
<keyword id="KW-0206">Cytoskeleton</keyword>
<keyword id="KW-0221">Differentiation</keyword>
<keyword id="KW-0282">Flagellum</keyword>
<keyword id="KW-0496">Mitochondrion</keyword>
<keyword id="KW-0539">Nucleus</keyword>
<keyword id="KW-1185">Reference proteome</keyword>
<keyword id="KW-0744">Spermatogenesis</keyword>
<gene>
    <name type="primary">SPMIP6</name>
    <name type="synonym">C9orf24</name>
    <name type="synonym">Cbe1</name>
    <name evidence="8" type="synonym">Smrp1</name>
</gene>
<proteinExistence type="evidence at protein level"/>
<sequence>MFLFSRKTKTPISTYSDSYRAPTSIKEVYKDPPLWAWEANKFVTPGLTQTMHRHVDPEALQKMTKCAAQDYTYKSSISGHPYLPEKYWLSPDEEDKCCPSYLDNDRYNTWKTSPCSNYWNKYTGCLPRLSKDTGMESVRGMPLEYPPKQERLNAYEREVVVNMLNSLSRNRTLPQIVPRCGCVDPLPGRLPYQGYESPCSGRHYCLRGMDYCTTREPSTERRLRPLCSQQPTECVALRSPARNAMCCYNSPAIILPVSQP</sequence>
<name>SMIP6_MOUSE</name>
<accession>Q2MH31</accession>
<accession>Q0GC36</accession>
<accession>Q9D1B3</accession>
<feature type="chain" id="PRO_0000296260" description="Sperm microtubule inner protein 6">
    <location>
        <begin position="1"/>
        <end position="260"/>
    </location>
</feature>
<feature type="splice variant" id="VSP_027172" description="In isoform 3 and isoform 4." evidence="7 9">
    <location>
        <begin position="1"/>
        <end position="134"/>
    </location>
</feature>
<feature type="splice variant" id="VSP_027173" description="In isoform 2 and isoform 4." evidence="9">
    <original>ECVALRSPARNAMCCYNSPAIILPVSQP</original>
    <variation>VRSVSPFGHRPGMQCAVTTPPPSFYPYPNLRWDTSHFKKTGGSQRNNYVVHPEFVSETCPVYPS</variation>
    <location>
        <begin position="233"/>
        <end position="260"/>
    </location>
</feature>
<protein>
    <recommendedName>
        <fullName>Sperm microtubule inner protein 6</fullName>
    </recommendedName>
    <alternativeName>
        <fullName>Ciliated bronchial epithelial protein 1</fullName>
    </alternativeName>
    <alternativeName>
        <fullName>Spermatid-specific manchette-related protein 1</fullName>
    </alternativeName>
    <alternativeName>
        <fullName>Testis development protein NYD-SP22</fullName>
    </alternativeName>
</protein>